<proteinExistence type="inferred from homology"/>
<reference key="1">
    <citation type="submission" date="2006-05" db="EMBL/GenBank/DDBJ databases">
        <title>Complete sequence of chromosome of Silicibacter sp. TM1040.</title>
        <authorList>
            <consortium name="US DOE Joint Genome Institute"/>
            <person name="Copeland A."/>
            <person name="Lucas S."/>
            <person name="Lapidus A."/>
            <person name="Barry K."/>
            <person name="Detter J.C."/>
            <person name="Glavina del Rio T."/>
            <person name="Hammon N."/>
            <person name="Israni S."/>
            <person name="Dalin E."/>
            <person name="Tice H."/>
            <person name="Pitluck S."/>
            <person name="Brettin T."/>
            <person name="Bruce D."/>
            <person name="Han C."/>
            <person name="Tapia R."/>
            <person name="Goodwin L."/>
            <person name="Thompson L.S."/>
            <person name="Gilna P."/>
            <person name="Schmutz J."/>
            <person name="Larimer F."/>
            <person name="Land M."/>
            <person name="Hauser L."/>
            <person name="Kyrpides N."/>
            <person name="Kim E."/>
            <person name="Belas R."/>
            <person name="Moran M.A."/>
            <person name="Buchan A."/>
            <person name="Gonzalez J.M."/>
            <person name="Schell M.A."/>
            <person name="Sun F."/>
            <person name="Richardson P."/>
        </authorList>
    </citation>
    <scope>NUCLEOTIDE SEQUENCE [LARGE SCALE GENOMIC DNA]</scope>
    <source>
        <strain>TM1040</strain>
    </source>
</reference>
<evidence type="ECO:0000255" key="1">
    <source>
        <dbReference type="HAMAP-Rule" id="MF_00455"/>
    </source>
</evidence>
<accession>Q1GKQ4</accession>
<organism>
    <name type="scientific">Ruegeria sp. (strain TM1040)</name>
    <name type="common">Silicibacter sp.</name>
    <dbReference type="NCBI Taxonomy" id="292414"/>
    <lineage>
        <taxon>Bacteria</taxon>
        <taxon>Pseudomonadati</taxon>
        <taxon>Pseudomonadota</taxon>
        <taxon>Alphaproteobacteria</taxon>
        <taxon>Rhodobacterales</taxon>
        <taxon>Roseobacteraceae</taxon>
        <taxon>Ruegeria</taxon>
    </lineage>
</organism>
<keyword id="KW-0119">Carbohydrate metabolism</keyword>
<keyword id="KW-0963">Cytoplasm</keyword>
<keyword id="KW-0413">Isomerase</keyword>
<keyword id="KW-0460">Magnesium</keyword>
<keyword id="KW-0479">Metal-binding</keyword>
<keyword id="KW-1185">Reference proteome</keyword>
<keyword id="KW-0859">Xylose metabolism</keyword>
<dbReference type="EC" id="5.3.1.5" evidence="1"/>
<dbReference type="EMBL" id="CP000377">
    <property type="protein sequence ID" value="ABF62762.1"/>
    <property type="molecule type" value="Genomic_DNA"/>
</dbReference>
<dbReference type="RefSeq" id="WP_011537400.1">
    <property type="nucleotide sequence ID" value="NC_008044.1"/>
</dbReference>
<dbReference type="SMR" id="Q1GKQ4"/>
<dbReference type="STRING" id="292414.TM1040_0029"/>
<dbReference type="KEGG" id="sit:TM1040_0029"/>
<dbReference type="eggNOG" id="COG2115">
    <property type="taxonomic scope" value="Bacteria"/>
</dbReference>
<dbReference type="HOGENOM" id="CLU_037261_1_0_5"/>
<dbReference type="OrthoDB" id="9763981at2"/>
<dbReference type="Proteomes" id="UP000000636">
    <property type="component" value="Chromosome"/>
</dbReference>
<dbReference type="GO" id="GO:0005737">
    <property type="term" value="C:cytoplasm"/>
    <property type="evidence" value="ECO:0007669"/>
    <property type="project" value="UniProtKB-SubCell"/>
</dbReference>
<dbReference type="GO" id="GO:0000287">
    <property type="term" value="F:magnesium ion binding"/>
    <property type="evidence" value="ECO:0007669"/>
    <property type="project" value="UniProtKB-UniRule"/>
</dbReference>
<dbReference type="GO" id="GO:0009045">
    <property type="term" value="F:xylose isomerase activity"/>
    <property type="evidence" value="ECO:0007669"/>
    <property type="project" value="UniProtKB-UniRule"/>
</dbReference>
<dbReference type="GO" id="GO:0042732">
    <property type="term" value="P:D-xylose metabolic process"/>
    <property type="evidence" value="ECO:0007669"/>
    <property type="project" value="UniProtKB-UniRule"/>
</dbReference>
<dbReference type="FunFam" id="3.20.20.150:FF:000002">
    <property type="entry name" value="Xylose isomerase"/>
    <property type="match status" value="1"/>
</dbReference>
<dbReference type="Gene3D" id="3.20.20.150">
    <property type="entry name" value="Divalent-metal-dependent TIM barrel enzymes"/>
    <property type="match status" value="1"/>
</dbReference>
<dbReference type="HAMAP" id="MF_00455">
    <property type="entry name" value="Xylose_isom_A"/>
    <property type="match status" value="1"/>
</dbReference>
<dbReference type="InterPro" id="IPR036237">
    <property type="entry name" value="Xyl_isomerase-like_sf"/>
</dbReference>
<dbReference type="InterPro" id="IPR013452">
    <property type="entry name" value="Xylose_isom_bac"/>
</dbReference>
<dbReference type="InterPro" id="IPR001998">
    <property type="entry name" value="Xylose_isomerase"/>
</dbReference>
<dbReference type="NCBIfam" id="NF003998">
    <property type="entry name" value="PRK05474.1"/>
    <property type="match status" value="1"/>
</dbReference>
<dbReference type="NCBIfam" id="TIGR02630">
    <property type="entry name" value="xylose_isom_A"/>
    <property type="match status" value="1"/>
</dbReference>
<dbReference type="PANTHER" id="PTHR48408">
    <property type="match status" value="1"/>
</dbReference>
<dbReference type="PANTHER" id="PTHR48408:SF1">
    <property type="entry name" value="XYLOSE ISOMERASE"/>
    <property type="match status" value="1"/>
</dbReference>
<dbReference type="PRINTS" id="PR00688">
    <property type="entry name" value="XYLOSISMRASE"/>
</dbReference>
<dbReference type="SUPFAM" id="SSF51658">
    <property type="entry name" value="Xylose isomerase-like"/>
    <property type="match status" value="1"/>
</dbReference>
<dbReference type="PROSITE" id="PS51415">
    <property type="entry name" value="XYLOSE_ISOMERASE"/>
    <property type="match status" value="1"/>
</dbReference>
<protein>
    <recommendedName>
        <fullName evidence="1">Xylose isomerase</fullName>
        <ecNumber evidence="1">5.3.1.5</ecNumber>
    </recommendedName>
</protein>
<name>XYLA_RUEST</name>
<comment type="catalytic activity">
    <reaction evidence="1">
        <text>alpha-D-xylose = alpha-D-xylulofuranose</text>
        <dbReference type="Rhea" id="RHEA:22816"/>
        <dbReference type="ChEBI" id="CHEBI:28518"/>
        <dbReference type="ChEBI" id="CHEBI:188998"/>
        <dbReference type="EC" id="5.3.1.5"/>
    </reaction>
</comment>
<comment type="cofactor">
    <cofactor evidence="1">
        <name>Mg(2+)</name>
        <dbReference type="ChEBI" id="CHEBI:18420"/>
    </cofactor>
    <text evidence="1">Binds 2 magnesium ions per subunit.</text>
</comment>
<comment type="subunit">
    <text evidence="1">Homotetramer.</text>
</comment>
<comment type="subcellular location">
    <subcellularLocation>
        <location evidence="1">Cytoplasm</location>
    </subcellularLocation>
</comment>
<comment type="similarity">
    <text evidence="1">Belongs to the xylose isomerase family.</text>
</comment>
<sequence length="436" mass="49100">MTTGFFGDVSKITFEGADSTNPLAFRHYNPDEVILGKRMEEHLRFATCYWHNFVWPGGDPFGGQTFDRPWFKDTMHAAKLKADVAFEMFTLLQSPYYCFHDADVRPEGANFAENTRNLNEIVDYFAQKQEETGVKLLWGTANLFSNARYMSGASTNPDPDVFAFSAATIKTCMDATHRLGGENYVLWGGREGYETLLNTDLAQEDQQMGRMLNMVVEYKHKIGFKGAILVEPKPQEPSKHQYDYDAATVYGFLKRHGLENEVKLNLEQGHAILAGHSFEHEIATAQALGIFGSIDMNRNDYQSGWDTDQFPNNTPEVALAYYHILKHGGFTTGGTNFDAKLRRQSIDAEDLLMAHIGGMDICARGFKAAAAMIEDGTLDQFVTDRYAGWQTDPAQDMLAGKLSLDEIAKRVEAEDINPKPRSGRQEYLENLINRFV</sequence>
<gene>
    <name evidence="1" type="primary">xylA</name>
    <name type="ordered locus">TM1040_0029</name>
</gene>
<feature type="chain" id="PRO_1000026455" description="Xylose isomerase">
    <location>
        <begin position="1"/>
        <end position="436"/>
    </location>
</feature>
<feature type="active site" evidence="1">
    <location>
        <position position="100"/>
    </location>
</feature>
<feature type="active site" evidence="1">
    <location>
        <position position="103"/>
    </location>
</feature>
<feature type="binding site" evidence="1">
    <location>
        <position position="231"/>
    </location>
    <ligand>
        <name>Mg(2+)</name>
        <dbReference type="ChEBI" id="CHEBI:18420"/>
        <label>1</label>
    </ligand>
</feature>
<feature type="binding site" evidence="1">
    <location>
        <position position="267"/>
    </location>
    <ligand>
        <name>Mg(2+)</name>
        <dbReference type="ChEBI" id="CHEBI:18420"/>
        <label>1</label>
    </ligand>
</feature>
<feature type="binding site" evidence="1">
    <location>
        <position position="267"/>
    </location>
    <ligand>
        <name>Mg(2+)</name>
        <dbReference type="ChEBI" id="CHEBI:18420"/>
        <label>2</label>
    </ligand>
</feature>
<feature type="binding site" evidence="1">
    <location>
        <position position="270"/>
    </location>
    <ligand>
        <name>Mg(2+)</name>
        <dbReference type="ChEBI" id="CHEBI:18420"/>
        <label>2</label>
    </ligand>
</feature>
<feature type="binding site" evidence="1">
    <location>
        <position position="295"/>
    </location>
    <ligand>
        <name>Mg(2+)</name>
        <dbReference type="ChEBI" id="CHEBI:18420"/>
        <label>1</label>
    </ligand>
</feature>
<feature type="binding site" evidence="1">
    <location>
        <position position="306"/>
    </location>
    <ligand>
        <name>Mg(2+)</name>
        <dbReference type="ChEBI" id="CHEBI:18420"/>
        <label>2</label>
    </ligand>
</feature>
<feature type="binding site" evidence="1">
    <location>
        <position position="308"/>
    </location>
    <ligand>
        <name>Mg(2+)</name>
        <dbReference type="ChEBI" id="CHEBI:18420"/>
        <label>2</label>
    </ligand>
</feature>
<feature type="binding site" evidence="1">
    <location>
        <position position="338"/>
    </location>
    <ligand>
        <name>Mg(2+)</name>
        <dbReference type="ChEBI" id="CHEBI:18420"/>
        <label>1</label>
    </ligand>
</feature>